<organism>
    <name type="scientific">Streptococcus pneumoniae (strain JJA)</name>
    <dbReference type="NCBI Taxonomy" id="488222"/>
    <lineage>
        <taxon>Bacteria</taxon>
        <taxon>Bacillati</taxon>
        <taxon>Bacillota</taxon>
        <taxon>Bacilli</taxon>
        <taxon>Lactobacillales</taxon>
        <taxon>Streptococcaceae</taxon>
        <taxon>Streptococcus</taxon>
    </lineage>
</organism>
<sequence length="150" mass="16523">MKVIFLADVKGKGKKGEIKEVPTGYAQNFLIKKNLAKEATAQAVGELRGKQKSEEKAHAEMIAEGKAIKAQLEAEETVVEFVEKVGPDGRTFGSITNKKIAEELQKQFGIKIDKRHIQVQAPIRAVGLIDVPVKIYQDITSVINLRVKEG</sequence>
<evidence type="ECO:0000255" key="1">
    <source>
        <dbReference type="HAMAP-Rule" id="MF_00503"/>
    </source>
</evidence>
<evidence type="ECO:0000305" key="2"/>
<keyword id="KW-0687">Ribonucleoprotein</keyword>
<keyword id="KW-0689">Ribosomal protein</keyword>
<keyword id="KW-0694">RNA-binding</keyword>
<keyword id="KW-0699">rRNA-binding</keyword>
<feature type="chain" id="PRO_1000196268" description="Large ribosomal subunit protein bL9">
    <location>
        <begin position="1"/>
        <end position="150"/>
    </location>
</feature>
<reference key="1">
    <citation type="journal article" date="2010" name="Genome Biol.">
        <title>Structure and dynamics of the pan-genome of Streptococcus pneumoniae and closely related species.</title>
        <authorList>
            <person name="Donati C."/>
            <person name="Hiller N.L."/>
            <person name="Tettelin H."/>
            <person name="Muzzi A."/>
            <person name="Croucher N.J."/>
            <person name="Angiuoli S.V."/>
            <person name="Oggioni M."/>
            <person name="Dunning Hotopp J.C."/>
            <person name="Hu F.Z."/>
            <person name="Riley D.R."/>
            <person name="Covacci A."/>
            <person name="Mitchell T.J."/>
            <person name="Bentley S.D."/>
            <person name="Kilian M."/>
            <person name="Ehrlich G.D."/>
            <person name="Rappuoli R."/>
            <person name="Moxon E.R."/>
            <person name="Masignani V."/>
        </authorList>
    </citation>
    <scope>NUCLEOTIDE SEQUENCE [LARGE SCALE GENOMIC DNA]</scope>
    <source>
        <strain>JJA</strain>
    </source>
</reference>
<proteinExistence type="inferred from homology"/>
<protein>
    <recommendedName>
        <fullName evidence="1">Large ribosomal subunit protein bL9</fullName>
    </recommendedName>
    <alternativeName>
        <fullName evidence="2">50S ribosomal protein L9</fullName>
    </alternativeName>
</protein>
<accession>C1CHK3</accession>
<name>RL9_STRZJ</name>
<comment type="function">
    <text evidence="1">Binds to the 23S rRNA.</text>
</comment>
<comment type="similarity">
    <text evidence="1">Belongs to the bacterial ribosomal protein bL9 family.</text>
</comment>
<dbReference type="EMBL" id="CP000919">
    <property type="protein sequence ID" value="ACO19028.1"/>
    <property type="molecule type" value="Genomic_DNA"/>
</dbReference>
<dbReference type="RefSeq" id="WP_000864220.1">
    <property type="nucleotide sequence ID" value="NC_012466.1"/>
</dbReference>
<dbReference type="SMR" id="C1CHK3"/>
<dbReference type="GeneID" id="45652575"/>
<dbReference type="KEGG" id="sjj:SPJ_2230"/>
<dbReference type="HOGENOM" id="CLU_078938_3_2_9"/>
<dbReference type="Proteomes" id="UP000002206">
    <property type="component" value="Chromosome"/>
</dbReference>
<dbReference type="GO" id="GO:1990904">
    <property type="term" value="C:ribonucleoprotein complex"/>
    <property type="evidence" value="ECO:0007669"/>
    <property type="project" value="UniProtKB-KW"/>
</dbReference>
<dbReference type="GO" id="GO:0005840">
    <property type="term" value="C:ribosome"/>
    <property type="evidence" value="ECO:0007669"/>
    <property type="project" value="UniProtKB-KW"/>
</dbReference>
<dbReference type="GO" id="GO:0019843">
    <property type="term" value="F:rRNA binding"/>
    <property type="evidence" value="ECO:0007669"/>
    <property type="project" value="UniProtKB-UniRule"/>
</dbReference>
<dbReference type="GO" id="GO:0003735">
    <property type="term" value="F:structural constituent of ribosome"/>
    <property type="evidence" value="ECO:0007669"/>
    <property type="project" value="InterPro"/>
</dbReference>
<dbReference type="GO" id="GO:0006412">
    <property type="term" value="P:translation"/>
    <property type="evidence" value="ECO:0007669"/>
    <property type="project" value="UniProtKB-UniRule"/>
</dbReference>
<dbReference type="FunFam" id="3.10.430.100:FF:000009">
    <property type="entry name" value="50S ribosomal protein L9"/>
    <property type="match status" value="1"/>
</dbReference>
<dbReference type="FunFam" id="3.40.5.10:FF:000002">
    <property type="entry name" value="50S ribosomal protein L9"/>
    <property type="match status" value="1"/>
</dbReference>
<dbReference type="Gene3D" id="3.10.430.100">
    <property type="entry name" value="Ribosomal protein L9, C-terminal domain"/>
    <property type="match status" value="1"/>
</dbReference>
<dbReference type="Gene3D" id="3.40.5.10">
    <property type="entry name" value="Ribosomal protein L9, N-terminal domain"/>
    <property type="match status" value="1"/>
</dbReference>
<dbReference type="HAMAP" id="MF_00503">
    <property type="entry name" value="Ribosomal_bL9"/>
    <property type="match status" value="1"/>
</dbReference>
<dbReference type="InterPro" id="IPR000244">
    <property type="entry name" value="Ribosomal_bL9"/>
</dbReference>
<dbReference type="InterPro" id="IPR009027">
    <property type="entry name" value="Ribosomal_bL9/RNase_H1_N"/>
</dbReference>
<dbReference type="InterPro" id="IPR020594">
    <property type="entry name" value="Ribosomal_bL9_bac/chp"/>
</dbReference>
<dbReference type="InterPro" id="IPR020069">
    <property type="entry name" value="Ribosomal_bL9_C"/>
</dbReference>
<dbReference type="InterPro" id="IPR036791">
    <property type="entry name" value="Ribosomal_bL9_C_sf"/>
</dbReference>
<dbReference type="InterPro" id="IPR020070">
    <property type="entry name" value="Ribosomal_bL9_N"/>
</dbReference>
<dbReference type="InterPro" id="IPR036935">
    <property type="entry name" value="Ribosomal_bL9_N_sf"/>
</dbReference>
<dbReference type="NCBIfam" id="TIGR00158">
    <property type="entry name" value="L9"/>
    <property type="match status" value="1"/>
</dbReference>
<dbReference type="PANTHER" id="PTHR21368">
    <property type="entry name" value="50S RIBOSOMAL PROTEIN L9"/>
    <property type="match status" value="1"/>
</dbReference>
<dbReference type="Pfam" id="PF03948">
    <property type="entry name" value="Ribosomal_L9_C"/>
    <property type="match status" value="1"/>
</dbReference>
<dbReference type="Pfam" id="PF01281">
    <property type="entry name" value="Ribosomal_L9_N"/>
    <property type="match status" value="1"/>
</dbReference>
<dbReference type="SUPFAM" id="SSF55658">
    <property type="entry name" value="L9 N-domain-like"/>
    <property type="match status" value="1"/>
</dbReference>
<dbReference type="SUPFAM" id="SSF55653">
    <property type="entry name" value="Ribosomal protein L9 C-domain"/>
    <property type="match status" value="1"/>
</dbReference>
<dbReference type="PROSITE" id="PS00651">
    <property type="entry name" value="RIBOSOMAL_L9"/>
    <property type="match status" value="1"/>
</dbReference>
<gene>
    <name evidence="1" type="primary">rplI</name>
    <name type="ordered locus">SPJ_2230</name>
</gene>